<comment type="function">
    <text evidence="1">Required for the first step of histidine biosynthesis. May allow the feedback regulation of ATP phosphoribosyltransferase activity by histidine (By similarity).</text>
</comment>
<comment type="pathway">
    <text>Amino-acid biosynthesis; L-histidine biosynthesis; L-histidine from 5-phospho-alpha-D-ribose 1-diphosphate: step 1/9.</text>
</comment>
<comment type="subunit">
    <text evidence="1">Heteromultimer composed of HisG and HisZ subunits.</text>
</comment>
<comment type="subcellular location">
    <subcellularLocation>
        <location evidence="1">Cytoplasm</location>
    </subcellularLocation>
</comment>
<comment type="miscellaneous">
    <text>This function is generally fulfilled by the C-terminal part of HisG, which is missing in some bacteria such as this one.</text>
</comment>
<comment type="similarity">
    <text evidence="2">Belongs to the class-II aminoacyl-tRNA synthetase family. HisZ subfamily.</text>
</comment>
<gene>
    <name type="primary">hisZ</name>
    <name type="ordered locus">BMEII1055</name>
</gene>
<sequence length="378" mass="40891">MTMVGSRTSPIFNALRVELNAREAELVEIPLIQPADPFLDMAGEDLRRRIFLTENENGDSLCLRPEFTIPVCRNHIALNAATPKRYAYLGEVFRQRRDGAAEFLQAGIEDLGAADEAASDARSLADALSCVKAIAPDAPLEIVLGDQSVFAGMLKALGLPQGWRKKLLRSFGDAHSMDLALAELTGTQRRDPLPESLAVLVAEGDEIGLARMLEAEMLEAGISPGAGRTPVEIARRLIEKEDLAATHFPAAALDLLRQFLAIRVSLDTAAVTLRAFAADNALDLGAVLQKFEARADAIAQAGIEMKDIIYDASFGRPLDYYTGLVYEIRDASNRQDGVLAGGGRYDRLLTMLGACEAIPGVGFSIWLDRLQALAGEKQ</sequence>
<proteinExistence type="inferred from homology"/>
<evidence type="ECO:0000250" key="1"/>
<evidence type="ECO:0000305" key="2"/>
<feature type="chain" id="PRO_0000171030" description="ATP phosphoribosyltransferase regulatory subunit">
    <location>
        <begin position="1"/>
        <end position="378"/>
    </location>
</feature>
<dbReference type="EMBL" id="AE008918">
    <property type="protein sequence ID" value="AAL54297.1"/>
    <property type="molecule type" value="Genomic_DNA"/>
</dbReference>
<dbReference type="PIR" id="AF3641">
    <property type="entry name" value="AF3641"/>
</dbReference>
<dbReference type="SMR" id="P64377"/>
<dbReference type="KEGG" id="bme:BMEII1055"/>
<dbReference type="eggNOG" id="COG3705">
    <property type="taxonomic scope" value="Bacteria"/>
</dbReference>
<dbReference type="UniPathway" id="UPA00031">
    <property type="reaction ID" value="UER00006"/>
</dbReference>
<dbReference type="Proteomes" id="UP000000419">
    <property type="component" value="Chromosome II"/>
</dbReference>
<dbReference type="GO" id="GO:0005737">
    <property type="term" value="C:cytoplasm"/>
    <property type="evidence" value="ECO:0007669"/>
    <property type="project" value="UniProtKB-SubCell"/>
</dbReference>
<dbReference type="GO" id="GO:0004821">
    <property type="term" value="F:histidine-tRNA ligase activity"/>
    <property type="evidence" value="ECO:0007669"/>
    <property type="project" value="TreeGrafter"/>
</dbReference>
<dbReference type="GO" id="GO:0006427">
    <property type="term" value="P:histidyl-tRNA aminoacylation"/>
    <property type="evidence" value="ECO:0007669"/>
    <property type="project" value="TreeGrafter"/>
</dbReference>
<dbReference type="GO" id="GO:0000105">
    <property type="term" value="P:L-histidine biosynthetic process"/>
    <property type="evidence" value="ECO:0007669"/>
    <property type="project" value="UniProtKB-UniRule"/>
</dbReference>
<dbReference type="Gene3D" id="3.30.930.10">
    <property type="entry name" value="Bira Bifunctional Protein, Domain 2"/>
    <property type="match status" value="1"/>
</dbReference>
<dbReference type="HAMAP" id="MF_00125">
    <property type="entry name" value="HisZ"/>
    <property type="match status" value="1"/>
</dbReference>
<dbReference type="InterPro" id="IPR045864">
    <property type="entry name" value="aa-tRNA-synth_II/BPL/LPL"/>
</dbReference>
<dbReference type="InterPro" id="IPR041715">
    <property type="entry name" value="HisRS-like_core"/>
</dbReference>
<dbReference type="InterPro" id="IPR004516">
    <property type="entry name" value="HisRS/HisZ"/>
</dbReference>
<dbReference type="InterPro" id="IPR004517">
    <property type="entry name" value="HisZ"/>
</dbReference>
<dbReference type="NCBIfam" id="NF008948">
    <property type="entry name" value="PRK12295.1-1"/>
    <property type="match status" value="1"/>
</dbReference>
<dbReference type="NCBIfam" id="NF008951">
    <property type="entry name" value="PRK12295.1-4"/>
    <property type="match status" value="1"/>
</dbReference>
<dbReference type="PANTHER" id="PTHR43707:SF1">
    <property type="entry name" value="HISTIDINE--TRNA LIGASE, MITOCHONDRIAL-RELATED"/>
    <property type="match status" value="1"/>
</dbReference>
<dbReference type="PANTHER" id="PTHR43707">
    <property type="entry name" value="HISTIDYL-TRNA SYNTHETASE"/>
    <property type="match status" value="1"/>
</dbReference>
<dbReference type="Pfam" id="PF13393">
    <property type="entry name" value="tRNA-synt_His"/>
    <property type="match status" value="2"/>
</dbReference>
<dbReference type="PIRSF" id="PIRSF001549">
    <property type="entry name" value="His-tRNA_synth"/>
    <property type="match status" value="1"/>
</dbReference>
<dbReference type="SUPFAM" id="SSF55681">
    <property type="entry name" value="Class II aaRS and biotin synthetases"/>
    <property type="match status" value="1"/>
</dbReference>
<keyword id="KW-0028">Amino-acid biosynthesis</keyword>
<keyword id="KW-0963">Cytoplasm</keyword>
<keyword id="KW-0368">Histidine biosynthesis</keyword>
<name>HISZ_BRUME</name>
<protein>
    <recommendedName>
        <fullName>ATP phosphoribosyltransferase regulatory subunit</fullName>
    </recommendedName>
</protein>
<accession>P64377</accession>
<accession>Q8YB46</accession>
<organism>
    <name type="scientific">Brucella melitensis biotype 1 (strain ATCC 23456 / CCUG 17765 / NCTC 10094 / 16M)</name>
    <dbReference type="NCBI Taxonomy" id="224914"/>
    <lineage>
        <taxon>Bacteria</taxon>
        <taxon>Pseudomonadati</taxon>
        <taxon>Pseudomonadota</taxon>
        <taxon>Alphaproteobacteria</taxon>
        <taxon>Hyphomicrobiales</taxon>
        <taxon>Brucellaceae</taxon>
        <taxon>Brucella/Ochrobactrum group</taxon>
        <taxon>Brucella</taxon>
    </lineage>
</organism>
<reference key="1">
    <citation type="journal article" date="2002" name="Proc. Natl. Acad. Sci. U.S.A.">
        <title>The genome sequence of the facultative intracellular pathogen Brucella melitensis.</title>
        <authorList>
            <person name="DelVecchio V.G."/>
            <person name="Kapatral V."/>
            <person name="Redkar R.J."/>
            <person name="Patra G."/>
            <person name="Mujer C."/>
            <person name="Los T."/>
            <person name="Ivanova N."/>
            <person name="Anderson I."/>
            <person name="Bhattacharyya A."/>
            <person name="Lykidis A."/>
            <person name="Reznik G."/>
            <person name="Jablonski L."/>
            <person name="Larsen N."/>
            <person name="D'Souza M."/>
            <person name="Bernal A."/>
            <person name="Mazur M."/>
            <person name="Goltsman E."/>
            <person name="Selkov E."/>
            <person name="Elzer P.H."/>
            <person name="Hagius S."/>
            <person name="O'Callaghan D."/>
            <person name="Letesson J.-J."/>
            <person name="Haselkorn R."/>
            <person name="Kyrpides N.C."/>
            <person name="Overbeek R."/>
        </authorList>
    </citation>
    <scope>NUCLEOTIDE SEQUENCE [LARGE SCALE GENOMIC DNA]</scope>
    <source>
        <strain>ATCC 23456 / CCUG 17765 / NCTC 10094 / 16M</strain>
    </source>
</reference>